<geneLocation type="chloroplast"/>
<comment type="function">
    <text evidence="1">This protein binds to 23S rRNA.</text>
</comment>
<comment type="subunit">
    <text evidence="1">Part of the 50S ribosomal subunit.</text>
</comment>
<comment type="subcellular location">
    <subcellularLocation>
        <location>Plastid</location>
        <location>Chloroplast</location>
    </subcellularLocation>
</comment>
<comment type="similarity">
    <text evidence="1">Belongs to the bacterial ribosomal protein bL21 family.</text>
</comment>
<accession>Q32S07</accession>
<sequence length="114" mass="13546">MNTYAIIEAGGEQLQVQPGRFYDIRLNVPVTEFWENRKIVFSRVLMIRSESNTFLGKPWLEHATVNGRIFHPRRGNKLIIYKMRPKKHTSKKNGHRQTFMRLIIDSIFFNNQNL</sequence>
<name>RK21_STAPU</name>
<protein>
    <recommendedName>
        <fullName evidence="1">Large ribosomal subunit protein bL21c</fullName>
    </recommendedName>
    <alternativeName>
        <fullName evidence="2">50S ribosomal protein L21, chloroplastic</fullName>
    </alternativeName>
</protein>
<feature type="chain" id="PRO_0000269450" description="Large ribosomal subunit protein bL21c">
    <location>
        <begin position="1"/>
        <end position="114"/>
    </location>
</feature>
<keyword id="KW-0150">Chloroplast</keyword>
<keyword id="KW-0934">Plastid</keyword>
<keyword id="KW-0687">Ribonucleoprotein</keyword>
<keyword id="KW-0689">Ribosomal protein</keyword>
<keyword id="KW-0694">RNA-binding</keyword>
<keyword id="KW-0699">rRNA-binding</keyword>
<organism>
    <name type="scientific">Staurastrum punctulatum</name>
    <name type="common">Green alga</name>
    <name type="synonym">Cosmoastrum punctulatum</name>
    <dbReference type="NCBI Taxonomy" id="102822"/>
    <lineage>
        <taxon>Eukaryota</taxon>
        <taxon>Viridiplantae</taxon>
        <taxon>Streptophyta</taxon>
        <taxon>Zygnematophyceae</taxon>
        <taxon>Zygnematophycidae</taxon>
        <taxon>Desmidiales</taxon>
        <taxon>Desmidiaceae</taxon>
        <taxon>Staurastrum</taxon>
    </lineage>
</organism>
<proteinExistence type="inferred from homology"/>
<dbReference type="EMBL" id="AY958085">
    <property type="protein sequence ID" value="AAX45741.1"/>
    <property type="molecule type" value="Genomic_DNA"/>
</dbReference>
<dbReference type="RefSeq" id="YP_636369.1">
    <property type="nucleotide sequence ID" value="NC_008116.1"/>
</dbReference>
<dbReference type="SMR" id="Q32S07"/>
<dbReference type="GeneID" id="4108665"/>
<dbReference type="GO" id="GO:0009507">
    <property type="term" value="C:chloroplast"/>
    <property type="evidence" value="ECO:0007669"/>
    <property type="project" value="UniProtKB-SubCell"/>
</dbReference>
<dbReference type="GO" id="GO:1990904">
    <property type="term" value="C:ribonucleoprotein complex"/>
    <property type="evidence" value="ECO:0007669"/>
    <property type="project" value="UniProtKB-KW"/>
</dbReference>
<dbReference type="GO" id="GO:0005840">
    <property type="term" value="C:ribosome"/>
    <property type="evidence" value="ECO:0007669"/>
    <property type="project" value="UniProtKB-KW"/>
</dbReference>
<dbReference type="GO" id="GO:0019843">
    <property type="term" value="F:rRNA binding"/>
    <property type="evidence" value="ECO:0007669"/>
    <property type="project" value="UniProtKB-UniRule"/>
</dbReference>
<dbReference type="GO" id="GO:0003735">
    <property type="term" value="F:structural constituent of ribosome"/>
    <property type="evidence" value="ECO:0007669"/>
    <property type="project" value="InterPro"/>
</dbReference>
<dbReference type="GO" id="GO:0006412">
    <property type="term" value="P:translation"/>
    <property type="evidence" value="ECO:0007669"/>
    <property type="project" value="UniProtKB-UniRule"/>
</dbReference>
<dbReference type="HAMAP" id="MF_01363">
    <property type="entry name" value="Ribosomal_bL21"/>
    <property type="match status" value="1"/>
</dbReference>
<dbReference type="InterPro" id="IPR028909">
    <property type="entry name" value="bL21-like"/>
</dbReference>
<dbReference type="InterPro" id="IPR036164">
    <property type="entry name" value="bL21-like_sf"/>
</dbReference>
<dbReference type="InterPro" id="IPR001787">
    <property type="entry name" value="Ribosomal_bL21"/>
</dbReference>
<dbReference type="NCBIfam" id="TIGR00061">
    <property type="entry name" value="L21"/>
    <property type="match status" value="1"/>
</dbReference>
<dbReference type="PANTHER" id="PTHR21349">
    <property type="entry name" value="50S RIBOSOMAL PROTEIN L21"/>
    <property type="match status" value="1"/>
</dbReference>
<dbReference type="PANTHER" id="PTHR21349:SF0">
    <property type="entry name" value="LARGE RIBOSOMAL SUBUNIT PROTEIN BL21M"/>
    <property type="match status" value="1"/>
</dbReference>
<dbReference type="Pfam" id="PF00829">
    <property type="entry name" value="Ribosomal_L21p"/>
    <property type="match status" value="1"/>
</dbReference>
<dbReference type="SUPFAM" id="SSF141091">
    <property type="entry name" value="L21p-like"/>
    <property type="match status" value="1"/>
</dbReference>
<gene>
    <name evidence="1" type="primary">rpl21</name>
</gene>
<reference key="1">
    <citation type="journal article" date="2005" name="BMC Biol.">
        <title>The complete chloroplast DNA sequences of the charophycean green algae Staurastrum and Zygnema reveal that the chloroplast genome underwent extensive changes during the evolution of the Zygnematales.</title>
        <authorList>
            <person name="Turmel M."/>
            <person name="Otis C."/>
            <person name="Lemieux C."/>
        </authorList>
    </citation>
    <scope>NUCLEOTIDE SEQUENCE [LARGE SCALE GENOMIC DNA]</scope>
</reference>
<evidence type="ECO:0000255" key="1">
    <source>
        <dbReference type="HAMAP-Rule" id="MF_01363"/>
    </source>
</evidence>
<evidence type="ECO:0000305" key="2"/>